<proteinExistence type="evidence at transcript level"/>
<keyword id="KW-1015">Disulfide bond</keyword>
<keyword id="KW-0960">Knottin</keyword>
<keyword id="KW-0964">Secreted</keyword>
<keyword id="KW-0732">Signal</keyword>
<keyword id="KW-0800">Toxin</keyword>
<feature type="signal peptide" evidence="2">
    <location>
        <begin position="1"/>
        <end position="20"/>
    </location>
</feature>
<feature type="propeptide" id="PRO_0000401585" evidence="1">
    <location>
        <begin position="21"/>
        <end position="44"/>
    </location>
</feature>
<feature type="chain" id="PRO_0000401586" description="U1-lycotoxin-Ls1cc">
    <location>
        <begin position="45"/>
        <end position="110"/>
    </location>
</feature>
<feature type="disulfide bond" evidence="1">
    <location>
        <begin position="47"/>
        <end position="62"/>
    </location>
</feature>
<feature type="disulfide bond" evidence="1">
    <location>
        <begin position="54"/>
        <end position="71"/>
    </location>
</feature>
<feature type="disulfide bond" evidence="1">
    <location>
        <begin position="61"/>
        <end position="89"/>
    </location>
</feature>
<feature type="disulfide bond" evidence="1">
    <location>
        <begin position="73"/>
        <end position="87"/>
    </location>
</feature>
<comment type="subcellular location">
    <subcellularLocation>
        <location evidence="1">Secreted</location>
    </subcellularLocation>
</comment>
<comment type="tissue specificity">
    <text>Expressed by the venom gland.</text>
</comment>
<comment type="domain">
    <text evidence="1">The presence of a 'disulfide through disulfide knot' structurally defines this protein as a knottin.</text>
</comment>
<comment type="similarity">
    <text evidence="3">Belongs to the neurotoxin 19 (CSTX) family. 03 subfamily.</text>
</comment>
<evidence type="ECO:0000250" key="1"/>
<evidence type="ECO:0000255" key="2"/>
<evidence type="ECO:0000305" key="3"/>
<name>TX145_LYCSI</name>
<accession>B6DCN4</accession>
<organism>
    <name type="scientific">Lycosa singoriensis</name>
    <name type="common">Wolf spider</name>
    <name type="synonym">Aranea singoriensis</name>
    <dbReference type="NCBI Taxonomy" id="434756"/>
    <lineage>
        <taxon>Eukaryota</taxon>
        <taxon>Metazoa</taxon>
        <taxon>Ecdysozoa</taxon>
        <taxon>Arthropoda</taxon>
        <taxon>Chelicerata</taxon>
        <taxon>Arachnida</taxon>
        <taxon>Araneae</taxon>
        <taxon>Araneomorphae</taxon>
        <taxon>Entelegynae</taxon>
        <taxon>Lycosoidea</taxon>
        <taxon>Lycosidae</taxon>
        <taxon>Lycosa</taxon>
    </lineage>
</organism>
<protein>
    <recommendedName>
        <fullName>U1-lycotoxin-Ls1cc</fullName>
    </recommendedName>
    <alternativeName>
        <fullName>Toxin-like structure LSTX-A45</fullName>
    </alternativeName>
</protein>
<sequence length="110" mass="12503">MKFVLLFGVLLVTLFSYSSAEMLDDFDQADEDELLSLIEKEEARKDCIPKHHECTSNKHGCCRGHLFKYECQCTTVVTQSREETERCFCGTPPHHKAAELVVGFGKKIFG</sequence>
<reference key="1">
    <citation type="journal article" date="2010" name="Zoology">
        <title>Transcriptome analysis of the venom glands of the Chinese wolf spider Lycosa singoriensis.</title>
        <authorList>
            <person name="Zhang Y."/>
            <person name="Chen J."/>
            <person name="Tang X."/>
            <person name="Wang F."/>
            <person name="Jiang L."/>
            <person name="Xiong X."/>
            <person name="Wang M."/>
            <person name="Rong M."/>
            <person name="Liu Z."/>
            <person name="Liang S."/>
        </authorList>
    </citation>
    <scope>NUCLEOTIDE SEQUENCE [LARGE SCALE MRNA]</scope>
    <source>
        <tissue>Venom gland</tissue>
    </source>
</reference>
<dbReference type="EMBL" id="EU925968">
    <property type="protein sequence ID" value="ACI41300.1"/>
    <property type="molecule type" value="mRNA"/>
</dbReference>
<dbReference type="EMBL" id="FM863972">
    <property type="protein sequence ID" value="CAS03570.1"/>
    <property type="molecule type" value="mRNA"/>
</dbReference>
<dbReference type="SMR" id="B6DCN4"/>
<dbReference type="ArachnoServer" id="AS000917">
    <property type="toxin name" value="U1-lycotoxin-Ls1cc"/>
</dbReference>
<dbReference type="GO" id="GO:0005576">
    <property type="term" value="C:extracellular region"/>
    <property type="evidence" value="ECO:0007669"/>
    <property type="project" value="UniProtKB-SubCell"/>
</dbReference>
<dbReference type="GO" id="GO:0090729">
    <property type="term" value="F:toxin activity"/>
    <property type="evidence" value="ECO:0007669"/>
    <property type="project" value="UniProtKB-KW"/>
</dbReference>
<dbReference type="InterPro" id="IPR019553">
    <property type="entry name" value="Spider_toxin_CSTX_knottin"/>
</dbReference>
<dbReference type="InterPro" id="IPR011142">
    <property type="entry name" value="Spider_toxin_CSTX_Knottin_CS"/>
</dbReference>
<dbReference type="Pfam" id="PF10530">
    <property type="entry name" value="Toxin_35"/>
    <property type="match status" value="1"/>
</dbReference>
<dbReference type="PROSITE" id="PS60029">
    <property type="entry name" value="SPIDER_CSTX"/>
    <property type="match status" value="1"/>
</dbReference>